<protein>
    <recommendedName>
        <fullName evidence="1">Cysteine desulfurase IscS</fullName>
        <ecNumber evidence="1">2.8.1.7</ecNumber>
    </recommendedName>
</protein>
<name>ISCS_PSEA8</name>
<sequence length="404" mass="44657">MKLPIYLDYSATTPVDPRVAQKMSECLLMDGNFGNPASRSHVFGWKAEEAVENARRQVAELVNADPREIVWTSGATESDNLAIKGVAHFYSGKGKHIITSKIEHKAVLDTCRQLEREGFEVTYLEPGEDGLITSALVEAALRDDTILVSVMHVNNEIGTVNDIAAIGELTRSRGVLFHVDAAQSTGKVEIDLDKLKVDLMSFSAHKTYGPKGIGALYVRRKPRVRIEGQMHGGGHERGMRSGTLATHQIVGMGEAFRIAKEEMAQENARVLALRDRFFAQIDGLEELYINGSMTSRVPHNLNVSFNYVEGESLIMALKDLAVSSGSACTSASLEPSYVLRALGRNDELAHSSIRFTFGRFTTEEEIDYAAKKVVEAVSKLRELSPLWDMYKEGVDLSQVEWQAH</sequence>
<accession>B7UWH7</accession>
<comment type="function">
    <text evidence="1">Master enzyme that delivers sulfur to a number of partners involved in Fe-S cluster assembly, tRNA modification or cofactor biosynthesis. Catalyzes the removal of elemental sulfur atoms from cysteine to produce alanine. Functions as a sulfur delivery protein for Fe-S cluster synthesis onto IscU, an Fe-S scaffold assembly protein, as well as other S acceptor proteins.</text>
</comment>
<comment type="catalytic activity">
    <reaction evidence="1">
        <text>(sulfur carrier)-H + L-cysteine = (sulfur carrier)-SH + L-alanine</text>
        <dbReference type="Rhea" id="RHEA:43892"/>
        <dbReference type="Rhea" id="RHEA-COMP:14737"/>
        <dbReference type="Rhea" id="RHEA-COMP:14739"/>
        <dbReference type="ChEBI" id="CHEBI:29917"/>
        <dbReference type="ChEBI" id="CHEBI:35235"/>
        <dbReference type="ChEBI" id="CHEBI:57972"/>
        <dbReference type="ChEBI" id="CHEBI:64428"/>
        <dbReference type="EC" id="2.8.1.7"/>
    </reaction>
</comment>
<comment type="cofactor">
    <cofactor evidence="1">
        <name>pyridoxal 5'-phosphate</name>
        <dbReference type="ChEBI" id="CHEBI:597326"/>
    </cofactor>
</comment>
<comment type="pathway">
    <text evidence="1">Cofactor biosynthesis; iron-sulfur cluster biosynthesis.</text>
</comment>
<comment type="subunit">
    <text evidence="1">Homodimer. Forms a heterotetramer with IscU, interacts with other sulfur acceptors.</text>
</comment>
<comment type="subcellular location">
    <subcellularLocation>
        <location evidence="1">Cytoplasm</location>
    </subcellularLocation>
</comment>
<comment type="similarity">
    <text evidence="1">Belongs to the class-V pyridoxal-phosphate-dependent aminotransferase family. NifS/IscS subfamily.</text>
</comment>
<organism>
    <name type="scientific">Pseudomonas aeruginosa (strain LESB58)</name>
    <dbReference type="NCBI Taxonomy" id="557722"/>
    <lineage>
        <taxon>Bacteria</taxon>
        <taxon>Pseudomonadati</taxon>
        <taxon>Pseudomonadota</taxon>
        <taxon>Gammaproteobacteria</taxon>
        <taxon>Pseudomonadales</taxon>
        <taxon>Pseudomonadaceae</taxon>
        <taxon>Pseudomonas</taxon>
    </lineage>
</organism>
<evidence type="ECO:0000255" key="1">
    <source>
        <dbReference type="HAMAP-Rule" id="MF_00331"/>
    </source>
</evidence>
<keyword id="KW-0001">2Fe-2S</keyword>
<keyword id="KW-0963">Cytoplasm</keyword>
<keyword id="KW-0408">Iron</keyword>
<keyword id="KW-0411">Iron-sulfur</keyword>
<keyword id="KW-0479">Metal-binding</keyword>
<keyword id="KW-0663">Pyridoxal phosphate</keyword>
<keyword id="KW-0808">Transferase</keyword>
<proteinExistence type="inferred from homology"/>
<dbReference type="EC" id="2.8.1.7" evidence="1"/>
<dbReference type="EMBL" id="FM209186">
    <property type="protein sequence ID" value="CAW25887.1"/>
    <property type="molecule type" value="Genomic_DNA"/>
</dbReference>
<dbReference type="RefSeq" id="WP_012613647.1">
    <property type="nucleotide sequence ID" value="NC_011770.1"/>
</dbReference>
<dbReference type="SMR" id="B7UWH7"/>
<dbReference type="KEGG" id="pag:PLES_11601"/>
<dbReference type="HOGENOM" id="CLU_003433_0_2_6"/>
<dbReference type="UniPathway" id="UPA00266"/>
<dbReference type="GO" id="GO:1990221">
    <property type="term" value="C:L-cysteine desulfurase complex"/>
    <property type="evidence" value="ECO:0007669"/>
    <property type="project" value="UniProtKB-ARBA"/>
</dbReference>
<dbReference type="GO" id="GO:0051537">
    <property type="term" value="F:2 iron, 2 sulfur cluster binding"/>
    <property type="evidence" value="ECO:0007669"/>
    <property type="project" value="UniProtKB-UniRule"/>
</dbReference>
<dbReference type="GO" id="GO:0031071">
    <property type="term" value="F:cysteine desulfurase activity"/>
    <property type="evidence" value="ECO:0007669"/>
    <property type="project" value="UniProtKB-UniRule"/>
</dbReference>
<dbReference type="GO" id="GO:0046872">
    <property type="term" value="F:metal ion binding"/>
    <property type="evidence" value="ECO:0007669"/>
    <property type="project" value="UniProtKB-KW"/>
</dbReference>
<dbReference type="GO" id="GO:0030170">
    <property type="term" value="F:pyridoxal phosphate binding"/>
    <property type="evidence" value="ECO:0007669"/>
    <property type="project" value="UniProtKB-UniRule"/>
</dbReference>
<dbReference type="GO" id="GO:0044571">
    <property type="term" value="P:[2Fe-2S] cluster assembly"/>
    <property type="evidence" value="ECO:0007669"/>
    <property type="project" value="UniProtKB-UniRule"/>
</dbReference>
<dbReference type="FunFam" id="3.40.640.10:FF:000003">
    <property type="entry name" value="Cysteine desulfurase IscS"/>
    <property type="match status" value="1"/>
</dbReference>
<dbReference type="FunFam" id="3.90.1150.10:FF:000002">
    <property type="entry name" value="Cysteine desulfurase IscS"/>
    <property type="match status" value="1"/>
</dbReference>
<dbReference type="Gene3D" id="3.90.1150.10">
    <property type="entry name" value="Aspartate Aminotransferase, domain 1"/>
    <property type="match status" value="1"/>
</dbReference>
<dbReference type="Gene3D" id="3.40.640.10">
    <property type="entry name" value="Type I PLP-dependent aspartate aminotransferase-like (Major domain)"/>
    <property type="match status" value="1"/>
</dbReference>
<dbReference type="HAMAP" id="MF_00331">
    <property type="entry name" value="Cys_desulf_IscS"/>
    <property type="match status" value="1"/>
</dbReference>
<dbReference type="InterPro" id="IPR000192">
    <property type="entry name" value="Aminotrans_V_dom"/>
</dbReference>
<dbReference type="InterPro" id="IPR020578">
    <property type="entry name" value="Aminotrans_V_PyrdxlP_BS"/>
</dbReference>
<dbReference type="InterPro" id="IPR010240">
    <property type="entry name" value="Cys_deSase_IscS"/>
</dbReference>
<dbReference type="InterPro" id="IPR016454">
    <property type="entry name" value="Cysteine_dSase"/>
</dbReference>
<dbReference type="InterPro" id="IPR015424">
    <property type="entry name" value="PyrdxlP-dep_Trfase"/>
</dbReference>
<dbReference type="InterPro" id="IPR015421">
    <property type="entry name" value="PyrdxlP-dep_Trfase_major"/>
</dbReference>
<dbReference type="InterPro" id="IPR015422">
    <property type="entry name" value="PyrdxlP-dep_Trfase_small"/>
</dbReference>
<dbReference type="NCBIfam" id="TIGR02006">
    <property type="entry name" value="IscS"/>
    <property type="match status" value="1"/>
</dbReference>
<dbReference type="NCBIfam" id="NF010611">
    <property type="entry name" value="PRK14012.1"/>
    <property type="match status" value="1"/>
</dbReference>
<dbReference type="PANTHER" id="PTHR11601:SF34">
    <property type="entry name" value="CYSTEINE DESULFURASE"/>
    <property type="match status" value="1"/>
</dbReference>
<dbReference type="PANTHER" id="PTHR11601">
    <property type="entry name" value="CYSTEINE DESULFURYLASE FAMILY MEMBER"/>
    <property type="match status" value="1"/>
</dbReference>
<dbReference type="Pfam" id="PF00266">
    <property type="entry name" value="Aminotran_5"/>
    <property type="match status" value="1"/>
</dbReference>
<dbReference type="PIRSF" id="PIRSF005572">
    <property type="entry name" value="NifS"/>
    <property type="match status" value="1"/>
</dbReference>
<dbReference type="SUPFAM" id="SSF53383">
    <property type="entry name" value="PLP-dependent transferases"/>
    <property type="match status" value="1"/>
</dbReference>
<dbReference type="PROSITE" id="PS00595">
    <property type="entry name" value="AA_TRANSFER_CLASS_5"/>
    <property type="match status" value="1"/>
</dbReference>
<reference key="1">
    <citation type="journal article" date="2009" name="Genome Res.">
        <title>Newly introduced genomic prophage islands are critical determinants of in vivo competitiveness in the Liverpool epidemic strain of Pseudomonas aeruginosa.</title>
        <authorList>
            <person name="Winstanley C."/>
            <person name="Langille M.G.I."/>
            <person name="Fothergill J.L."/>
            <person name="Kukavica-Ibrulj I."/>
            <person name="Paradis-Bleau C."/>
            <person name="Sanschagrin F."/>
            <person name="Thomson N.R."/>
            <person name="Winsor G.L."/>
            <person name="Quail M.A."/>
            <person name="Lennard N."/>
            <person name="Bignell A."/>
            <person name="Clarke L."/>
            <person name="Seeger K."/>
            <person name="Saunders D."/>
            <person name="Harris D."/>
            <person name="Parkhill J."/>
            <person name="Hancock R.E.W."/>
            <person name="Brinkman F.S.L."/>
            <person name="Levesque R.C."/>
        </authorList>
    </citation>
    <scope>NUCLEOTIDE SEQUENCE [LARGE SCALE GENOMIC DNA]</scope>
    <source>
        <strain>LESB58</strain>
    </source>
</reference>
<gene>
    <name evidence="1" type="primary">iscS</name>
    <name type="ordered locus">PLES_11601</name>
</gene>
<feature type="chain" id="PRO_1000119636" description="Cysteine desulfurase IscS">
    <location>
        <begin position="1"/>
        <end position="404"/>
    </location>
</feature>
<feature type="active site" description="Cysteine persulfide intermediate" evidence="1">
    <location>
        <position position="328"/>
    </location>
</feature>
<feature type="binding site" evidence="1">
    <location>
        <begin position="75"/>
        <end position="76"/>
    </location>
    <ligand>
        <name>pyridoxal 5'-phosphate</name>
        <dbReference type="ChEBI" id="CHEBI:597326"/>
    </ligand>
</feature>
<feature type="binding site" evidence="1">
    <location>
        <position position="155"/>
    </location>
    <ligand>
        <name>pyridoxal 5'-phosphate</name>
        <dbReference type="ChEBI" id="CHEBI:597326"/>
    </ligand>
</feature>
<feature type="binding site" evidence="1">
    <location>
        <position position="183"/>
    </location>
    <ligand>
        <name>pyridoxal 5'-phosphate</name>
        <dbReference type="ChEBI" id="CHEBI:597326"/>
    </ligand>
</feature>
<feature type="binding site" evidence="1">
    <location>
        <begin position="203"/>
        <end position="205"/>
    </location>
    <ligand>
        <name>pyridoxal 5'-phosphate</name>
        <dbReference type="ChEBI" id="CHEBI:597326"/>
    </ligand>
</feature>
<feature type="binding site" evidence="1">
    <location>
        <position position="243"/>
    </location>
    <ligand>
        <name>pyridoxal 5'-phosphate</name>
        <dbReference type="ChEBI" id="CHEBI:597326"/>
    </ligand>
</feature>
<feature type="binding site" description="via persulfide group" evidence="1">
    <location>
        <position position="328"/>
    </location>
    <ligand>
        <name>[2Fe-2S] cluster</name>
        <dbReference type="ChEBI" id="CHEBI:190135"/>
        <note>ligand shared with IscU</note>
    </ligand>
</feature>
<feature type="modified residue" description="N6-(pyridoxal phosphate)lysine" evidence="1">
    <location>
        <position position="206"/>
    </location>
</feature>